<comment type="function">
    <text evidence="1">Catalyzes the attachment of isoleucine to tRNA(Ile). As IleRS can inadvertently accommodate and process structurally similar amino acids such as valine, to avoid such errors it has two additional distinct tRNA(Ile)-dependent editing activities. One activity is designated as 'pretransfer' editing and involves the hydrolysis of activated Val-AMP. The other activity is designated 'posttransfer' editing and involves deacylation of mischarged Val-tRNA(Ile).</text>
</comment>
<comment type="catalytic activity">
    <reaction evidence="1">
        <text>tRNA(Ile) + L-isoleucine + ATP = L-isoleucyl-tRNA(Ile) + AMP + diphosphate</text>
        <dbReference type="Rhea" id="RHEA:11060"/>
        <dbReference type="Rhea" id="RHEA-COMP:9666"/>
        <dbReference type="Rhea" id="RHEA-COMP:9695"/>
        <dbReference type="ChEBI" id="CHEBI:30616"/>
        <dbReference type="ChEBI" id="CHEBI:33019"/>
        <dbReference type="ChEBI" id="CHEBI:58045"/>
        <dbReference type="ChEBI" id="CHEBI:78442"/>
        <dbReference type="ChEBI" id="CHEBI:78528"/>
        <dbReference type="ChEBI" id="CHEBI:456215"/>
        <dbReference type="EC" id="6.1.1.5"/>
    </reaction>
</comment>
<comment type="cofactor">
    <cofactor evidence="1">
        <name>Zn(2+)</name>
        <dbReference type="ChEBI" id="CHEBI:29105"/>
    </cofactor>
</comment>
<comment type="subunit">
    <text evidence="1">Monomer.</text>
</comment>
<comment type="subcellular location">
    <subcellularLocation>
        <location evidence="1">Cytoplasm</location>
    </subcellularLocation>
</comment>
<comment type="domain">
    <text evidence="1">IleRS has two distinct active sites: one for aminoacylation and one for editing. The misactivated valine is translocated from the active site to the editing site, which sterically excludes the correctly activated isoleucine. The single editing site contains two valyl binding pockets, one specific for each substrate (Val-AMP or Val-tRNA(Ile)).</text>
</comment>
<comment type="similarity">
    <text evidence="1">Belongs to the class-I aminoacyl-tRNA synthetase family. IleS type 2 subfamily.</text>
</comment>
<feature type="chain" id="PRO_0000098561" description="Isoleucine--tRNA ligase">
    <location>
        <begin position="1"/>
        <end position="1086"/>
    </location>
</feature>
<feature type="short sequence motif" description="'HIGH' region">
    <location>
        <begin position="53"/>
        <end position="63"/>
    </location>
</feature>
<feature type="short sequence motif" description="'KMSKS' region">
    <location>
        <begin position="624"/>
        <end position="628"/>
    </location>
</feature>
<feature type="binding site" evidence="1">
    <location>
        <position position="627"/>
    </location>
    <ligand>
        <name>ATP</name>
        <dbReference type="ChEBI" id="CHEBI:30616"/>
    </ligand>
</feature>
<protein>
    <recommendedName>
        <fullName evidence="1">Isoleucine--tRNA ligase</fullName>
        <ecNumber evidence="1">6.1.1.5</ecNumber>
    </recommendedName>
    <alternativeName>
        <fullName evidence="1">Isoleucyl-tRNA synthetase</fullName>
        <shortName evidence="1">IleRS</shortName>
    </alternativeName>
</protein>
<reference key="1">
    <citation type="journal article" date="2004" name="J. Bacteriol.">
        <title>Complete genome sequence of Rickettsia typhi and comparison with sequences of other Rickettsiae.</title>
        <authorList>
            <person name="McLeod M.P."/>
            <person name="Qin X."/>
            <person name="Karpathy S.E."/>
            <person name="Gioia J."/>
            <person name="Highlander S.K."/>
            <person name="Fox G.E."/>
            <person name="McNeill T.Z."/>
            <person name="Jiang H."/>
            <person name="Muzny D."/>
            <person name="Jacob L.S."/>
            <person name="Hawes A.C."/>
            <person name="Sodergren E."/>
            <person name="Gill R."/>
            <person name="Hume J."/>
            <person name="Morgan M."/>
            <person name="Fan G."/>
            <person name="Amin A.G."/>
            <person name="Gibbs R.A."/>
            <person name="Hong C."/>
            <person name="Yu X.-J."/>
            <person name="Walker D.H."/>
            <person name="Weinstock G.M."/>
        </authorList>
    </citation>
    <scope>NUCLEOTIDE SEQUENCE [LARGE SCALE GENOMIC DNA]</scope>
    <source>
        <strain>ATCC VR-144 / Wilmington</strain>
    </source>
</reference>
<dbReference type="EC" id="6.1.1.5" evidence="1"/>
<dbReference type="EMBL" id="AE017197">
    <property type="protein sequence ID" value="AAU04070.1"/>
    <property type="molecule type" value="Genomic_DNA"/>
</dbReference>
<dbReference type="RefSeq" id="WP_011191050.1">
    <property type="nucleotide sequence ID" value="NC_006142.1"/>
</dbReference>
<dbReference type="SMR" id="Q68WC2"/>
<dbReference type="KEGG" id="rty:RT0606"/>
<dbReference type="eggNOG" id="COG0060">
    <property type="taxonomic scope" value="Bacteria"/>
</dbReference>
<dbReference type="HOGENOM" id="CLU_001493_1_1_5"/>
<dbReference type="OrthoDB" id="9810365at2"/>
<dbReference type="Proteomes" id="UP000000604">
    <property type="component" value="Chromosome"/>
</dbReference>
<dbReference type="GO" id="GO:0005737">
    <property type="term" value="C:cytoplasm"/>
    <property type="evidence" value="ECO:0007669"/>
    <property type="project" value="UniProtKB-SubCell"/>
</dbReference>
<dbReference type="GO" id="GO:0002161">
    <property type="term" value="F:aminoacyl-tRNA deacylase activity"/>
    <property type="evidence" value="ECO:0007669"/>
    <property type="project" value="InterPro"/>
</dbReference>
<dbReference type="GO" id="GO:0005524">
    <property type="term" value="F:ATP binding"/>
    <property type="evidence" value="ECO:0007669"/>
    <property type="project" value="UniProtKB-UniRule"/>
</dbReference>
<dbReference type="GO" id="GO:0004822">
    <property type="term" value="F:isoleucine-tRNA ligase activity"/>
    <property type="evidence" value="ECO:0007669"/>
    <property type="project" value="UniProtKB-UniRule"/>
</dbReference>
<dbReference type="GO" id="GO:0000049">
    <property type="term" value="F:tRNA binding"/>
    <property type="evidence" value="ECO:0007669"/>
    <property type="project" value="InterPro"/>
</dbReference>
<dbReference type="GO" id="GO:0008270">
    <property type="term" value="F:zinc ion binding"/>
    <property type="evidence" value="ECO:0007669"/>
    <property type="project" value="UniProtKB-UniRule"/>
</dbReference>
<dbReference type="GO" id="GO:0006428">
    <property type="term" value="P:isoleucyl-tRNA aminoacylation"/>
    <property type="evidence" value="ECO:0007669"/>
    <property type="project" value="UniProtKB-UniRule"/>
</dbReference>
<dbReference type="CDD" id="cd07961">
    <property type="entry name" value="Anticodon_Ia_Ile_ABEc"/>
    <property type="match status" value="1"/>
</dbReference>
<dbReference type="CDD" id="cd00818">
    <property type="entry name" value="IleRS_core"/>
    <property type="match status" value="1"/>
</dbReference>
<dbReference type="FunFam" id="3.40.50.620:FF:000075">
    <property type="entry name" value="Isoleucine--tRNA ligase"/>
    <property type="match status" value="1"/>
</dbReference>
<dbReference type="FunFam" id="3.40.50.620:FF:000241">
    <property type="entry name" value="Isoleucine--tRNA ligase"/>
    <property type="match status" value="1"/>
</dbReference>
<dbReference type="Gene3D" id="3.40.50.620">
    <property type="entry name" value="HUPs"/>
    <property type="match status" value="2"/>
</dbReference>
<dbReference type="Gene3D" id="1.10.730.10">
    <property type="entry name" value="Isoleucyl-tRNA Synthetase, Domain 1"/>
    <property type="match status" value="1"/>
</dbReference>
<dbReference type="HAMAP" id="MF_02003">
    <property type="entry name" value="Ile_tRNA_synth_type2"/>
    <property type="match status" value="1"/>
</dbReference>
<dbReference type="InterPro" id="IPR001412">
    <property type="entry name" value="aa-tRNA-synth_I_CS"/>
</dbReference>
<dbReference type="InterPro" id="IPR002300">
    <property type="entry name" value="aa-tRNA-synth_Ia"/>
</dbReference>
<dbReference type="InterPro" id="IPR033709">
    <property type="entry name" value="Anticodon_Ile_ABEc"/>
</dbReference>
<dbReference type="InterPro" id="IPR002301">
    <property type="entry name" value="Ile-tRNA-ligase"/>
</dbReference>
<dbReference type="InterPro" id="IPR023586">
    <property type="entry name" value="Ile-tRNA-ligase_type2"/>
</dbReference>
<dbReference type="InterPro" id="IPR013155">
    <property type="entry name" value="M/V/L/I-tRNA-synth_anticd-bd"/>
</dbReference>
<dbReference type="InterPro" id="IPR014729">
    <property type="entry name" value="Rossmann-like_a/b/a_fold"/>
</dbReference>
<dbReference type="InterPro" id="IPR009080">
    <property type="entry name" value="tRNAsynth_Ia_anticodon-bd"/>
</dbReference>
<dbReference type="InterPro" id="IPR009008">
    <property type="entry name" value="Val/Leu/Ile-tRNA-synth_edit"/>
</dbReference>
<dbReference type="NCBIfam" id="TIGR00392">
    <property type="entry name" value="ileS"/>
    <property type="match status" value="1"/>
</dbReference>
<dbReference type="PANTHER" id="PTHR42780:SF1">
    <property type="entry name" value="ISOLEUCINE--TRNA LIGASE, CYTOPLASMIC"/>
    <property type="match status" value="1"/>
</dbReference>
<dbReference type="PANTHER" id="PTHR42780">
    <property type="entry name" value="SOLEUCYL-TRNA SYNTHETASE"/>
    <property type="match status" value="1"/>
</dbReference>
<dbReference type="Pfam" id="PF08264">
    <property type="entry name" value="Anticodon_1"/>
    <property type="match status" value="1"/>
</dbReference>
<dbReference type="Pfam" id="PF19302">
    <property type="entry name" value="DUF5915"/>
    <property type="match status" value="1"/>
</dbReference>
<dbReference type="Pfam" id="PF00133">
    <property type="entry name" value="tRNA-synt_1"/>
    <property type="match status" value="1"/>
</dbReference>
<dbReference type="PRINTS" id="PR00984">
    <property type="entry name" value="TRNASYNTHILE"/>
</dbReference>
<dbReference type="SUPFAM" id="SSF47323">
    <property type="entry name" value="Anticodon-binding domain of a subclass of class I aminoacyl-tRNA synthetases"/>
    <property type="match status" value="1"/>
</dbReference>
<dbReference type="SUPFAM" id="SSF52374">
    <property type="entry name" value="Nucleotidylyl transferase"/>
    <property type="match status" value="1"/>
</dbReference>
<dbReference type="SUPFAM" id="SSF50677">
    <property type="entry name" value="ValRS/IleRS/LeuRS editing domain"/>
    <property type="match status" value="1"/>
</dbReference>
<dbReference type="PROSITE" id="PS00178">
    <property type="entry name" value="AA_TRNA_LIGASE_I"/>
    <property type="match status" value="1"/>
</dbReference>
<accession>Q68WC2</accession>
<name>SYI_RICTY</name>
<evidence type="ECO:0000255" key="1">
    <source>
        <dbReference type="HAMAP-Rule" id="MF_02003"/>
    </source>
</evidence>
<organism>
    <name type="scientific">Rickettsia typhi (strain ATCC VR-144 / Wilmington)</name>
    <dbReference type="NCBI Taxonomy" id="257363"/>
    <lineage>
        <taxon>Bacteria</taxon>
        <taxon>Pseudomonadati</taxon>
        <taxon>Pseudomonadota</taxon>
        <taxon>Alphaproteobacteria</taxon>
        <taxon>Rickettsiales</taxon>
        <taxon>Rickettsiaceae</taxon>
        <taxon>Rickettsieae</taxon>
        <taxon>Rickettsia</taxon>
        <taxon>typhus group</taxon>
    </lineage>
</organism>
<proteinExistence type="inferred from homology"/>
<keyword id="KW-0030">Aminoacyl-tRNA synthetase</keyword>
<keyword id="KW-0067">ATP-binding</keyword>
<keyword id="KW-0963">Cytoplasm</keyword>
<keyword id="KW-0436">Ligase</keyword>
<keyword id="KW-0479">Metal-binding</keyword>
<keyword id="KW-0547">Nucleotide-binding</keyword>
<keyword id="KW-0648">Protein biosynthesis</keyword>
<keyword id="KW-0862">Zinc</keyword>
<gene>
    <name evidence="1" type="primary">ileS</name>
    <name type="ordered locus">RT0606</name>
</gene>
<sequence>MTNTKYYPDVSANVDFAAIEREILKFWQNNNIFQKSIDHRDGESEFIFYDGPPFANGLPHYGHLLTGFIKDVYARYQTVKGKKVERRFGWDCHGLPAEMQSEKELGISGRLAITNFGIEKFNNHCRASVMQYASEWKQYVTRQARWVAFDNAYKTMDKNFMESVLWAFKELYNKGLLYESMRVMPYSWACETPLSNFETRLDNSYRERTDKAITVSFMLNDITLFNSMISQKLGMTGGDNFKEYRILAWTTTPWTLPANLALAVGSDIDYALVNKNDVCYIIAASSVAKYAKELGLSGKENFEIIKGLKLQGLSYKPLFNYFENHPNSFKIFASNFVVEGEGTGIVHMAPGFGEDDQILCESKGIELVCPVDNSGKFTKEIPDLEGVQVFDANDKIIIKLKEQGNWIKTEQYIHNYPHCWRTDTPLIYKAVPSWYVRVTQFKDRMVELNQQINWIPHNVKDNLFGKWLENARDWSISRNRFWGTPLPVWKSDDPKYPRIDVYGSIEEIEQDFGVKINDLHRPFIDELTRTNPDDPTGKSIMRRIDDVFDCWFESGSMPYGQAHYPFENKKWFVEHFPADFIVEYSSQTRGWFYTLIVLSTALFDRPPFLNCICHGVILDATGQKLSKRLNNYADPLELFDRYGSDALRVTMLSSNVVKGQELLIDKDGKMIFDTLRLFIKPIWNAYHFFTIYANADALKGTLNFTSQNVLDIYILSKLKIAVNKIEESLDNFDTQTAYHAVSEFFEVLNNWYIRRSRARFWKKEKDTDKQNAYNTLYSCLETMTIAMSALVPMISEAIYQGLHNTAITQLNCLLLEGKHVVQNPMSGTQDYNTSVHLCNYPTLSDFEINHELVSTMDNVLDICSNSLFIRSTKNIRVRQPLACITIISKHNNNLKDFEDLIKDEINVKTVIYRDDLENYAHKKLSLNFAILGKRLPHKMKAIIDASKKGEWETSTLGLVICGEILNSNEYKLVLEPHSHIKGTANFENNSSLLILDLELTSELIEEGYARDIIRFIQHARKEADFSITDKILIEIISEFDLSKIIENYGDFIKEQTLGEFAKNFMPDYVSKVALENNLIQLKVKRL</sequence>